<accession>A2SS93</accession>
<gene>
    <name type="ordered locus">Mlab_1030</name>
</gene>
<reference key="1">
    <citation type="journal article" date="2009" name="Stand. Genomic Sci.">
        <title>Complete genome sequence of Methanocorpusculum labreanum type strain Z.</title>
        <authorList>
            <person name="Anderson I.J."/>
            <person name="Sieprawska-Lupa M."/>
            <person name="Goltsman E."/>
            <person name="Lapidus A."/>
            <person name="Copeland A."/>
            <person name="Glavina Del Rio T."/>
            <person name="Tice H."/>
            <person name="Dalin E."/>
            <person name="Barry K."/>
            <person name="Pitluck S."/>
            <person name="Hauser L."/>
            <person name="Land M."/>
            <person name="Lucas S."/>
            <person name="Richardson P."/>
            <person name="Whitman W.B."/>
            <person name="Kyrpides N.C."/>
        </authorList>
    </citation>
    <scope>NUCLEOTIDE SEQUENCE [LARGE SCALE GENOMIC DNA]</scope>
    <source>
        <strain>ATCC 43576 / DSM 4855 / Z</strain>
    </source>
</reference>
<name>Y1030_METLZ</name>
<comment type="similarity">
    <text evidence="1">Belongs to the UPF0210 family.</text>
</comment>
<evidence type="ECO:0000255" key="1">
    <source>
        <dbReference type="HAMAP-Rule" id="MF_01221"/>
    </source>
</evidence>
<protein>
    <recommendedName>
        <fullName evidence="1">UPF0210 protein Mlab_1030</fullName>
    </recommendedName>
</protein>
<keyword id="KW-1185">Reference proteome</keyword>
<proteinExistence type="inferred from homology"/>
<feature type="chain" id="PRO_1000066764" description="UPF0210 protein Mlab_1030">
    <location>
        <begin position="1"/>
        <end position="454"/>
    </location>
</feature>
<dbReference type="EMBL" id="CP000559">
    <property type="protein sequence ID" value="ABN07199.1"/>
    <property type="molecule type" value="Genomic_DNA"/>
</dbReference>
<dbReference type="RefSeq" id="WP_011833402.1">
    <property type="nucleotide sequence ID" value="NC_008942.1"/>
</dbReference>
<dbReference type="SMR" id="A2SS93"/>
<dbReference type="STRING" id="410358.Mlab_1030"/>
<dbReference type="GeneID" id="4795328"/>
<dbReference type="KEGG" id="mla:Mlab_1030"/>
<dbReference type="eggNOG" id="arCOG04321">
    <property type="taxonomic scope" value="Archaea"/>
</dbReference>
<dbReference type="HOGENOM" id="CLU_048704_0_0_2"/>
<dbReference type="OrthoDB" id="21376at2157"/>
<dbReference type="Proteomes" id="UP000000365">
    <property type="component" value="Chromosome"/>
</dbReference>
<dbReference type="CDD" id="cd08025">
    <property type="entry name" value="RNR_PFL_like_DUF711"/>
    <property type="match status" value="1"/>
</dbReference>
<dbReference type="Gene3D" id="3.20.70.20">
    <property type="match status" value="1"/>
</dbReference>
<dbReference type="HAMAP" id="MF_01221">
    <property type="entry name" value="UPF0210"/>
    <property type="match status" value="1"/>
</dbReference>
<dbReference type="InterPro" id="IPR007841">
    <property type="entry name" value="UPF0210"/>
</dbReference>
<dbReference type="NCBIfam" id="NF003700">
    <property type="entry name" value="PRK05313.1"/>
    <property type="match status" value="1"/>
</dbReference>
<dbReference type="PANTHER" id="PTHR37560:SF1">
    <property type="entry name" value="UPF0210 PROTEIN MJ1665"/>
    <property type="match status" value="1"/>
</dbReference>
<dbReference type="PANTHER" id="PTHR37560">
    <property type="entry name" value="UPF0210 PROTEIN SPR0218"/>
    <property type="match status" value="1"/>
</dbReference>
<dbReference type="Pfam" id="PF05167">
    <property type="entry name" value="DUF711"/>
    <property type="match status" value="1"/>
</dbReference>
<dbReference type="SUPFAM" id="SSF51998">
    <property type="entry name" value="PFL-like glycyl radical enzymes"/>
    <property type="match status" value="1"/>
</dbReference>
<sequence length="454" mass="47671">MINIFEVNETNKMIEQEMLDVRTITLGISLLDCCDTDLDKLNTRIYEKITRVAKNLVAVGKEIEREYGIPIVNKRISVTPIALVGGQACSSPEDFVTIAKTLDRAAKEVGVNFLGGYSALVSKGMTKAERDLILSIPQALACTERICSSVNIGSTRTGINMDAVKLMGEIVLSTAEATKDQNSLGCAKLVVFCNAPDDNPFMAGAFHGVTEGDAVINVGVSGPGVVKHALEAVRGKNFEVLCETVKKTAFKVTRMGQLVALEASERLGIPFGIVDLSLAPTPSVGDSVAEILEEMGLESVGAPGTTAALALLNDQVKKGGVMASSFVGGLSGAFIPVSEDQGMIDAVNRGALTLEKLEAMTSVCSVGLDMIAIPGNTPATTIAGIIADEAAIGMINQKTTAVRLIPVIGKDIGDTVEFGGLLGYAPVQPVNKFSCANFINRGGRIPAPIHSFKN</sequence>
<organism>
    <name type="scientific">Methanocorpusculum labreanum (strain ATCC 43576 / DSM 4855 / Z)</name>
    <dbReference type="NCBI Taxonomy" id="410358"/>
    <lineage>
        <taxon>Archaea</taxon>
        <taxon>Methanobacteriati</taxon>
        <taxon>Methanobacteriota</taxon>
        <taxon>Stenosarchaea group</taxon>
        <taxon>Methanomicrobia</taxon>
        <taxon>Methanomicrobiales</taxon>
        <taxon>Methanocorpusculaceae</taxon>
        <taxon>Methanocorpusculum</taxon>
    </lineage>
</organism>